<gene>
    <name type="ORF">HCAG_02413</name>
</gene>
<comment type="function">
    <text evidence="1">Catalyzes the removal of a penultimate prolyl residue from the N-termini of peptides.</text>
</comment>
<comment type="catalytic activity">
    <reaction>
        <text>Release of any N-terminal amino acid, including proline, that is linked to proline, even from a dipeptide or tripeptide.</text>
        <dbReference type="EC" id="3.4.11.9"/>
    </reaction>
</comment>
<comment type="cofactor">
    <cofactor evidence="1">
        <name>Mn(2+)</name>
        <dbReference type="ChEBI" id="CHEBI:29035"/>
    </cofactor>
    <text evidence="1">Binds 2 manganese ions per subunit.</text>
</comment>
<comment type="similarity">
    <text evidence="2">Belongs to the peptidase M24B family.</text>
</comment>
<accession>A6QYF6</accession>
<sequence>MGPPLAQELTQACNQPLAATSNLQPDDGYKIELRAENGVDKYPAKQHARKVAAQIRQGKGLIFLMGQKSTLHEDSDQERSLRQRRYFFYLSGVDEADCDLTYDIKTDKLTLYVPDFDLRRAIWMGPTLERKSALQKFDVDEVNYHSALDEDVKKWAKNQGPGSTIYLLHGSQGPTDNPSNVIIDTKTLKLAMDACRVIKDEHEIQLIRRANDISAAAHIEILRGITSMSNESHVEGSFLNTCVSLGAHKQAYQIIAASGSNAATLHYSKNNEPLRGRQFVCLDAGAEWNCYASDVTRTFPITHQWPSIEAKQIYQLVQEMQESCIALVKEGVRYLDLHFLAHNILIKGFLTLGIFKGGTLDEVKKSGASLLFFPHGLGHYIGLEVHDVSPQSIMAQGINDDSNNMLILPTCVSPCTTSSPALTSGMVITIEPGIYFSQLALENAKPEQLKYIDMARVKNYMAVGGVRIEDDILVTKTGHENLTKVPKGDDMLEIIRQGKKGNDSHHV</sequence>
<feature type="chain" id="PRO_0000411817" description="Probable Xaa-Pro aminopeptidase HCAG_02413">
    <location>
        <begin position="1"/>
        <end position="507"/>
    </location>
</feature>
<feature type="binding site" evidence="1">
    <location>
        <position position="283"/>
    </location>
    <ligand>
        <name>Mn(2+)</name>
        <dbReference type="ChEBI" id="CHEBI:29035"/>
        <label>2</label>
    </ligand>
</feature>
<feature type="binding site" evidence="1">
    <location>
        <position position="294"/>
    </location>
    <ligand>
        <name>Mn(2+)</name>
        <dbReference type="ChEBI" id="CHEBI:29035"/>
        <label>1</label>
    </ligand>
</feature>
<feature type="binding site" evidence="1">
    <location>
        <position position="294"/>
    </location>
    <ligand>
        <name>Mn(2+)</name>
        <dbReference type="ChEBI" id="CHEBI:29035"/>
        <label>2</label>
    </ligand>
</feature>
<feature type="binding site" evidence="1">
    <location>
        <position position="431"/>
    </location>
    <ligand>
        <name>Mn(2+)</name>
        <dbReference type="ChEBI" id="CHEBI:29035"/>
        <label>1</label>
    </ligand>
</feature>
<feature type="binding site" evidence="1">
    <location>
        <position position="469"/>
    </location>
    <ligand>
        <name>Mn(2+)</name>
        <dbReference type="ChEBI" id="CHEBI:29035"/>
        <label>1</label>
    </ligand>
</feature>
<feature type="binding site" evidence="1">
    <location>
        <position position="469"/>
    </location>
    <ligand>
        <name>Mn(2+)</name>
        <dbReference type="ChEBI" id="CHEBI:29035"/>
        <label>2</label>
    </ligand>
</feature>
<proteinExistence type="inferred from homology"/>
<protein>
    <recommendedName>
        <fullName>Probable Xaa-Pro aminopeptidase HCAG_02413</fullName>
        <ecNumber>3.4.11.9</ecNumber>
    </recommendedName>
    <alternativeName>
        <fullName>Aminoacylproline aminopeptidase</fullName>
    </alternativeName>
    <alternativeName>
        <fullName>Prolidase</fullName>
    </alternativeName>
</protein>
<dbReference type="EC" id="3.4.11.9"/>
<dbReference type="EMBL" id="CH476656">
    <property type="protein sequence ID" value="EDN05810.1"/>
    <property type="molecule type" value="Genomic_DNA"/>
</dbReference>
<dbReference type="RefSeq" id="XP_001542242.1">
    <property type="nucleotide sequence ID" value="XM_001542192.1"/>
</dbReference>
<dbReference type="SMR" id="A6QYF6"/>
<dbReference type="STRING" id="339724.A6QYF6"/>
<dbReference type="GeneID" id="5448657"/>
<dbReference type="KEGG" id="aje:HCAG_02413"/>
<dbReference type="VEuPathDB" id="FungiDB:HCAG_02413"/>
<dbReference type="HOGENOM" id="CLU_017266_1_2_1"/>
<dbReference type="OMA" id="YELRMIR"/>
<dbReference type="OrthoDB" id="966at299071"/>
<dbReference type="Proteomes" id="UP000009297">
    <property type="component" value="Unassembled WGS sequence"/>
</dbReference>
<dbReference type="GO" id="GO:0030145">
    <property type="term" value="F:manganese ion binding"/>
    <property type="evidence" value="ECO:0007669"/>
    <property type="project" value="InterPro"/>
</dbReference>
<dbReference type="GO" id="GO:0070006">
    <property type="term" value="F:metalloaminopeptidase activity"/>
    <property type="evidence" value="ECO:0007669"/>
    <property type="project" value="InterPro"/>
</dbReference>
<dbReference type="GO" id="GO:0006508">
    <property type="term" value="P:proteolysis"/>
    <property type="evidence" value="ECO:0007669"/>
    <property type="project" value="UniProtKB-KW"/>
</dbReference>
<dbReference type="CDD" id="cd01087">
    <property type="entry name" value="Prolidase"/>
    <property type="match status" value="1"/>
</dbReference>
<dbReference type="Gene3D" id="3.90.230.10">
    <property type="entry name" value="Creatinase/methionine aminopeptidase superfamily"/>
    <property type="match status" value="1"/>
</dbReference>
<dbReference type="Gene3D" id="3.40.350.10">
    <property type="entry name" value="Creatinase/prolidase N-terminal domain"/>
    <property type="match status" value="1"/>
</dbReference>
<dbReference type="InterPro" id="IPR007865">
    <property type="entry name" value="Aminopep_P_N"/>
</dbReference>
<dbReference type="InterPro" id="IPR029149">
    <property type="entry name" value="Creatin/AminoP/Spt16_N"/>
</dbReference>
<dbReference type="InterPro" id="IPR036005">
    <property type="entry name" value="Creatinase/aminopeptidase-like"/>
</dbReference>
<dbReference type="InterPro" id="IPR000994">
    <property type="entry name" value="Pept_M24"/>
</dbReference>
<dbReference type="InterPro" id="IPR001131">
    <property type="entry name" value="Peptidase_M24B_aminopep-P_CS"/>
</dbReference>
<dbReference type="InterPro" id="IPR052433">
    <property type="entry name" value="X-Pro_dipept-like"/>
</dbReference>
<dbReference type="PANTHER" id="PTHR43226">
    <property type="entry name" value="XAA-PRO AMINOPEPTIDASE 3"/>
    <property type="match status" value="1"/>
</dbReference>
<dbReference type="PANTHER" id="PTHR43226:SF3">
    <property type="entry name" value="XAA-PRO AMINOPEPTIDASE AN0832-RELATED"/>
    <property type="match status" value="1"/>
</dbReference>
<dbReference type="Pfam" id="PF05195">
    <property type="entry name" value="AMP_N"/>
    <property type="match status" value="1"/>
</dbReference>
<dbReference type="Pfam" id="PF00557">
    <property type="entry name" value="Peptidase_M24"/>
    <property type="match status" value="1"/>
</dbReference>
<dbReference type="SMART" id="SM01011">
    <property type="entry name" value="AMP_N"/>
    <property type="match status" value="1"/>
</dbReference>
<dbReference type="SUPFAM" id="SSF55920">
    <property type="entry name" value="Creatinase/aminopeptidase"/>
    <property type="match status" value="1"/>
</dbReference>
<dbReference type="SUPFAM" id="SSF53092">
    <property type="entry name" value="Creatinase/prolidase N-terminal domain"/>
    <property type="match status" value="1"/>
</dbReference>
<dbReference type="PROSITE" id="PS00491">
    <property type="entry name" value="PROLINE_PEPTIDASE"/>
    <property type="match status" value="1"/>
</dbReference>
<organism>
    <name type="scientific">Ajellomyces capsulatus (strain NAm1 / WU24)</name>
    <name type="common">Darling's disease fungus</name>
    <name type="synonym">Histoplasma capsulatum</name>
    <dbReference type="NCBI Taxonomy" id="2059318"/>
    <lineage>
        <taxon>Eukaryota</taxon>
        <taxon>Fungi</taxon>
        <taxon>Dikarya</taxon>
        <taxon>Ascomycota</taxon>
        <taxon>Pezizomycotina</taxon>
        <taxon>Eurotiomycetes</taxon>
        <taxon>Eurotiomycetidae</taxon>
        <taxon>Onygenales</taxon>
        <taxon>Ajellomycetaceae</taxon>
        <taxon>Histoplasma</taxon>
    </lineage>
</organism>
<keyword id="KW-0031">Aminopeptidase</keyword>
<keyword id="KW-0378">Hydrolase</keyword>
<keyword id="KW-0464">Manganese</keyword>
<keyword id="KW-0479">Metal-binding</keyword>
<keyword id="KW-0482">Metalloprotease</keyword>
<keyword id="KW-0645">Protease</keyword>
<keyword id="KW-1185">Reference proteome</keyword>
<evidence type="ECO:0000250" key="1"/>
<evidence type="ECO:0000305" key="2"/>
<reference key="1">
    <citation type="journal article" date="2009" name="Genome Res.">
        <title>Comparative genomic analyses of the human fungal pathogens Coccidioides and their relatives.</title>
        <authorList>
            <person name="Sharpton T.J."/>
            <person name="Stajich J.E."/>
            <person name="Rounsley S.D."/>
            <person name="Gardner M.J."/>
            <person name="Wortman J.R."/>
            <person name="Jordar V.S."/>
            <person name="Maiti R."/>
            <person name="Kodira C.D."/>
            <person name="Neafsey D.E."/>
            <person name="Zeng Q."/>
            <person name="Hung C.-Y."/>
            <person name="McMahan C."/>
            <person name="Muszewska A."/>
            <person name="Grynberg M."/>
            <person name="Mandel M.A."/>
            <person name="Kellner E.M."/>
            <person name="Barker B.M."/>
            <person name="Galgiani J.N."/>
            <person name="Orbach M.J."/>
            <person name="Kirkland T.N."/>
            <person name="Cole G.T."/>
            <person name="Henn M.R."/>
            <person name="Birren B.W."/>
            <person name="Taylor J.W."/>
        </authorList>
    </citation>
    <scope>NUCLEOTIDE SEQUENCE [LARGE SCALE GENOMIC DNA]</scope>
    <source>
        <strain>NAm1 / WU24</strain>
    </source>
</reference>
<name>AMPP2_AJECN</name>